<reference key="1">
    <citation type="journal article" date="2003" name="Proc. Natl. Acad. Sci. U.S.A.">
        <title>The complete genome sequence of the carcinogenic bacterium Helicobacter hepaticus.</title>
        <authorList>
            <person name="Suerbaum S."/>
            <person name="Josenhans C."/>
            <person name="Sterzenbach T."/>
            <person name="Drescher B."/>
            <person name="Brandt P."/>
            <person name="Bell M."/>
            <person name="Droege M."/>
            <person name="Fartmann B."/>
            <person name="Fischer H.-P."/>
            <person name="Ge Z."/>
            <person name="Hoerster A."/>
            <person name="Holland R."/>
            <person name="Klein K."/>
            <person name="Koenig J."/>
            <person name="Macko L."/>
            <person name="Mendz G.L."/>
            <person name="Nyakatura G."/>
            <person name="Schauer D.B."/>
            <person name="Shen Z."/>
            <person name="Weber J."/>
            <person name="Frosch M."/>
            <person name="Fox J.G."/>
        </authorList>
    </citation>
    <scope>NUCLEOTIDE SEQUENCE [LARGE SCALE GENOMIC DNA]</scope>
    <source>
        <strain>ATCC 51449 / 3B1</strain>
    </source>
</reference>
<protein>
    <recommendedName>
        <fullName>Acylphosphatase</fullName>
        <ecNumber>3.6.1.7</ecNumber>
    </recommendedName>
    <alternativeName>
        <fullName>Acylphosphate phosphohydrolase</fullName>
    </alternativeName>
</protein>
<proteinExistence type="inferred from homology"/>
<gene>
    <name type="primary">acyP</name>
    <name type="ordered locus">HH_0129</name>
</gene>
<feature type="chain" id="PRO_0000326722" description="Acylphosphatase">
    <location>
        <begin position="1"/>
        <end position="96"/>
    </location>
</feature>
<feature type="domain" description="Acylphosphatase-like" evidence="1">
    <location>
        <begin position="4"/>
        <end position="96"/>
    </location>
</feature>
<feature type="active site" evidence="1">
    <location>
        <position position="19"/>
    </location>
</feature>
<feature type="active site" evidence="1">
    <location>
        <position position="42"/>
    </location>
</feature>
<sequence>MKKRCEFLIFGKVQGVGFRRFVKYRVDKLNEESKVLSGNVCNLSDGSVRVIAQGEEEALEKLCKILEIGPIKSEVERIQSREIDIDESLNDFEILR</sequence>
<dbReference type="EC" id="3.6.1.7"/>
<dbReference type="EMBL" id="AE017125">
    <property type="protein sequence ID" value="AAP76726.1"/>
    <property type="molecule type" value="Genomic_DNA"/>
</dbReference>
<dbReference type="RefSeq" id="WP_011114972.1">
    <property type="nucleotide sequence ID" value="NC_004917.1"/>
</dbReference>
<dbReference type="SMR" id="Q7VJW4"/>
<dbReference type="STRING" id="235279.HH_0129"/>
<dbReference type="KEGG" id="hhe:HH_0129"/>
<dbReference type="eggNOG" id="COG1254">
    <property type="taxonomic scope" value="Bacteria"/>
</dbReference>
<dbReference type="HOGENOM" id="CLU_141932_1_1_7"/>
<dbReference type="OrthoDB" id="5295388at2"/>
<dbReference type="Proteomes" id="UP000002495">
    <property type="component" value="Chromosome"/>
</dbReference>
<dbReference type="GO" id="GO:0003998">
    <property type="term" value="F:acylphosphatase activity"/>
    <property type="evidence" value="ECO:0007669"/>
    <property type="project" value="UniProtKB-EC"/>
</dbReference>
<dbReference type="Gene3D" id="3.30.70.100">
    <property type="match status" value="1"/>
</dbReference>
<dbReference type="InterPro" id="IPR020456">
    <property type="entry name" value="Acylphosphatase"/>
</dbReference>
<dbReference type="InterPro" id="IPR001792">
    <property type="entry name" value="Acylphosphatase-like_dom"/>
</dbReference>
<dbReference type="InterPro" id="IPR036046">
    <property type="entry name" value="Acylphosphatase-like_dom_sf"/>
</dbReference>
<dbReference type="InterPro" id="IPR017968">
    <property type="entry name" value="Acylphosphatase_CS"/>
</dbReference>
<dbReference type="PANTHER" id="PTHR47268">
    <property type="entry name" value="ACYLPHOSPHATASE"/>
    <property type="match status" value="1"/>
</dbReference>
<dbReference type="PANTHER" id="PTHR47268:SF4">
    <property type="entry name" value="ACYLPHOSPHATASE"/>
    <property type="match status" value="1"/>
</dbReference>
<dbReference type="Pfam" id="PF00708">
    <property type="entry name" value="Acylphosphatase"/>
    <property type="match status" value="1"/>
</dbReference>
<dbReference type="SUPFAM" id="SSF54975">
    <property type="entry name" value="Acylphosphatase/BLUF domain-like"/>
    <property type="match status" value="1"/>
</dbReference>
<dbReference type="PROSITE" id="PS00150">
    <property type="entry name" value="ACYLPHOSPHATASE_1"/>
    <property type="match status" value="1"/>
</dbReference>
<dbReference type="PROSITE" id="PS51160">
    <property type="entry name" value="ACYLPHOSPHATASE_3"/>
    <property type="match status" value="1"/>
</dbReference>
<organism>
    <name type="scientific">Helicobacter hepaticus (strain ATCC 51449 / 3B1)</name>
    <dbReference type="NCBI Taxonomy" id="235279"/>
    <lineage>
        <taxon>Bacteria</taxon>
        <taxon>Pseudomonadati</taxon>
        <taxon>Campylobacterota</taxon>
        <taxon>Epsilonproteobacteria</taxon>
        <taxon>Campylobacterales</taxon>
        <taxon>Helicobacteraceae</taxon>
        <taxon>Helicobacter</taxon>
    </lineage>
</organism>
<name>ACYP_HELHP</name>
<keyword id="KW-0378">Hydrolase</keyword>
<keyword id="KW-1185">Reference proteome</keyword>
<comment type="catalytic activity">
    <reaction>
        <text>an acyl phosphate + H2O = a carboxylate + phosphate + H(+)</text>
        <dbReference type="Rhea" id="RHEA:14965"/>
        <dbReference type="ChEBI" id="CHEBI:15377"/>
        <dbReference type="ChEBI" id="CHEBI:15378"/>
        <dbReference type="ChEBI" id="CHEBI:29067"/>
        <dbReference type="ChEBI" id="CHEBI:43474"/>
        <dbReference type="ChEBI" id="CHEBI:59918"/>
        <dbReference type="EC" id="3.6.1.7"/>
    </reaction>
</comment>
<comment type="similarity">
    <text evidence="2">Belongs to the acylphosphatase family.</text>
</comment>
<evidence type="ECO:0000255" key="1">
    <source>
        <dbReference type="PROSITE-ProRule" id="PRU00520"/>
    </source>
</evidence>
<evidence type="ECO:0000305" key="2"/>
<accession>Q7VJW4</accession>